<reference key="1">
    <citation type="journal article" date="2003" name="Microbiology">
        <title>The complete genome sequence of the avian pathogen Mycoplasma gallisepticum strain R(low).</title>
        <authorList>
            <person name="Papazisi L."/>
            <person name="Gorton T.S."/>
            <person name="Kutish G."/>
            <person name="Markham P.F."/>
            <person name="Browning G.F."/>
            <person name="Nguyen D.K."/>
            <person name="Swartzell S."/>
            <person name="Madan A."/>
            <person name="Mahairas G."/>
            <person name="Geary S.J."/>
        </authorList>
    </citation>
    <scope>NUCLEOTIDE SEQUENCE [LARGE SCALE GENOMIC DNA]</scope>
    <source>
        <strain>R(low / passage 15 / clone 2)</strain>
    </source>
</reference>
<proteinExistence type="inferred from homology"/>
<comment type="function">
    <text evidence="1">Participates in chromosomal partition during cell division. May act via the formation of a condensin-like complex containing Smc and ScpB that pull DNA away from mid-cell into both cell halves (By similarity).</text>
</comment>
<comment type="subunit">
    <text evidence="1">Component of a cohesin-like complex composed of ScpA, ScpB and the Smc homodimer, in which ScpA and ScpB bind to the head domain of Smc. The presence of the three proteins is required for the association of the complex with DNA (By similarity).</text>
</comment>
<comment type="subcellular location">
    <subcellularLocation>
        <location evidence="1">Cytoplasm</location>
    </subcellularLocation>
    <text evidence="1">Associated with two foci at the outer edges of the nucleoid region in young cells, and at four foci within both cell halves in older cells.</text>
</comment>
<comment type="similarity">
    <text evidence="3">Belongs to the ScpA family.</text>
</comment>
<comment type="caution">
    <text evidence="3">Fused to a domain related to the dihydrofolate reductase family in its N-terminus. It is however unknown whether it contains such enzymatic activity.</text>
</comment>
<dbReference type="EMBL" id="AE015450">
    <property type="protein sequence ID" value="AAP56753.2"/>
    <property type="molecule type" value="Genomic_DNA"/>
</dbReference>
<dbReference type="RefSeq" id="WP_011113649.1">
    <property type="nucleotide sequence ID" value="NC_004829.2"/>
</dbReference>
<dbReference type="SMR" id="Q7NB76"/>
<dbReference type="KEGG" id="mga:MGA_0037"/>
<dbReference type="PATRIC" id="fig|233150.7.peg.453"/>
<dbReference type="HOGENOM" id="CLU_538423_0_0_14"/>
<dbReference type="OrthoDB" id="9811016at2"/>
<dbReference type="Proteomes" id="UP000001418">
    <property type="component" value="Chromosome"/>
</dbReference>
<dbReference type="GO" id="GO:0005737">
    <property type="term" value="C:cytoplasm"/>
    <property type="evidence" value="ECO:0007669"/>
    <property type="project" value="UniProtKB-SubCell"/>
</dbReference>
<dbReference type="GO" id="GO:0004146">
    <property type="term" value="F:dihydrofolate reductase activity"/>
    <property type="evidence" value="ECO:0007669"/>
    <property type="project" value="InterPro"/>
</dbReference>
<dbReference type="GO" id="GO:0051301">
    <property type="term" value="P:cell division"/>
    <property type="evidence" value="ECO:0007669"/>
    <property type="project" value="UniProtKB-KW"/>
</dbReference>
<dbReference type="GO" id="GO:0007059">
    <property type="term" value="P:chromosome segregation"/>
    <property type="evidence" value="ECO:0007669"/>
    <property type="project" value="UniProtKB-KW"/>
</dbReference>
<dbReference type="GO" id="GO:0046654">
    <property type="term" value="P:tetrahydrofolate biosynthetic process"/>
    <property type="evidence" value="ECO:0007669"/>
    <property type="project" value="InterPro"/>
</dbReference>
<dbReference type="CDD" id="cd00209">
    <property type="entry name" value="DHFR"/>
    <property type="match status" value="1"/>
</dbReference>
<dbReference type="Gene3D" id="6.10.250.2410">
    <property type="match status" value="1"/>
</dbReference>
<dbReference type="Gene3D" id="3.40.430.10">
    <property type="entry name" value="Dihydrofolate Reductase, subunit A"/>
    <property type="match status" value="1"/>
</dbReference>
<dbReference type="InterPro" id="IPR024072">
    <property type="entry name" value="DHFR-like_dom_sf"/>
</dbReference>
<dbReference type="InterPro" id="IPR001796">
    <property type="entry name" value="DHFR_dom"/>
</dbReference>
<dbReference type="InterPro" id="IPR003768">
    <property type="entry name" value="ScpA"/>
</dbReference>
<dbReference type="NCBIfam" id="NF001751">
    <property type="entry name" value="PRK00478.1"/>
    <property type="match status" value="1"/>
</dbReference>
<dbReference type="PANTHER" id="PTHR33969">
    <property type="entry name" value="SEGREGATION AND CONDENSATION PROTEIN A"/>
    <property type="match status" value="1"/>
</dbReference>
<dbReference type="PANTHER" id="PTHR33969:SF2">
    <property type="entry name" value="SEGREGATION AND CONDENSATION PROTEIN A"/>
    <property type="match status" value="1"/>
</dbReference>
<dbReference type="Pfam" id="PF00186">
    <property type="entry name" value="DHFR_1"/>
    <property type="match status" value="1"/>
</dbReference>
<dbReference type="Pfam" id="PF02616">
    <property type="entry name" value="SMC_ScpA"/>
    <property type="match status" value="1"/>
</dbReference>
<dbReference type="PRINTS" id="PR00070">
    <property type="entry name" value="DHFR"/>
</dbReference>
<dbReference type="SUPFAM" id="SSF53597">
    <property type="entry name" value="Dihydrofolate reductase-like"/>
    <property type="match status" value="1"/>
</dbReference>
<dbReference type="PROSITE" id="PS51330">
    <property type="entry name" value="DHFR_2"/>
    <property type="match status" value="1"/>
</dbReference>
<accession>Q7NB76</accession>
<organism>
    <name type="scientific">Mycoplasmoides gallisepticum (strain R(low / passage 15 / clone 2))</name>
    <name type="common">Mycoplasma gallisepticum</name>
    <dbReference type="NCBI Taxonomy" id="710127"/>
    <lineage>
        <taxon>Bacteria</taxon>
        <taxon>Bacillati</taxon>
        <taxon>Mycoplasmatota</taxon>
        <taxon>Mycoplasmoidales</taxon>
        <taxon>Mycoplasmoidaceae</taxon>
        <taxon>Mycoplasmoides</taxon>
    </lineage>
</organism>
<name>SCPA_MYCGA</name>
<gene>
    <name type="primary">scpA</name>
    <name type="ordered locus">MYCGA4030</name>
    <name type="ORF">MGA_0037</name>
</gene>
<feature type="chain" id="PRO_0000211093" description="Segregation and condensation protein A">
    <location>
        <begin position="1"/>
        <end position="592"/>
    </location>
</feature>
<feature type="domain" description="DHFR" evidence="2">
    <location>
        <begin position="1"/>
        <end position="155"/>
    </location>
</feature>
<feature type="region of interest" description="ScpA">
    <location>
        <begin position="156"/>
        <end position="592"/>
    </location>
</feature>
<sequence>MIKLIWCEDLNHGIAKNNQIPWKIDEELNHFHQTTTNHPIIMGYNTYLAMNKILANQANIVISKKHQRELKNKNELFLYSDLKKALIDFSIVDLFIIGGKKTIEQAIKYADQLVISKLNADYGCDLFVNLNYDDFSLVQTKEYDQFVVEYWERKPNTKKPEDLIEELNINLNDDFLNLSFKHFSGPFDLLLHLIKDKKMDIMALDLFELTNQYFAYINKHMINLDLVSDYLYMACELLRIKSDLSIPNFEDETKIDLNNDDERDRIVKRIIEYKRYSELLPSLQKMQLERFSLFAKEEDDWDVFKLTSNDLLEAPLPDYVNPKKLKKAMERVFEKLKIKTITEHKIVIEELSIEDVKNEILSIIKKLLNNQYDRFIDLEKIFEQIDPKKLNLRYFVTSFVCLLILVREQKIDLNQKNDDESISACLVDPTKIVNSQESIQEVIQRQQEDEKALKESIKQIQEERKQSFFKQREEYLKKKYGEYYVSREQYQKLTPEEKINIRINQRKIDEQEKLNKAKAQNLVDENNQIIDLKTKKPSAKQILYEADLIIKQLDDLINDQQEDYDSQAELEALHTDLIKLDDEQEQDLIKEE</sequence>
<keyword id="KW-0131">Cell cycle</keyword>
<keyword id="KW-0132">Cell division</keyword>
<keyword id="KW-0159">Chromosome partition</keyword>
<keyword id="KW-0963">Cytoplasm</keyword>
<keyword id="KW-1185">Reference proteome</keyword>
<protein>
    <recommendedName>
        <fullName>Segregation and condensation protein A</fullName>
    </recommendedName>
</protein>
<evidence type="ECO:0000250" key="1"/>
<evidence type="ECO:0000255" key="2">
    <source>
        <dbReference type="PROSITE-ProRule" id="PRU00660"/>
    </source>
</evidence>
<evidence type="ECO:0000305" key="3"/>